<evidence type="ECO:0000255" key="1">
    <source>
        <dbReference type="HAMAP-Rule" id="MF_01685"/>
    </source>
</evidence>
<reference key="1">
    <citation type="journal article" date="2002" name="Proc. Natl. Acad. Sci. U.S.A.">
        <title>Genome sequence of Streptococcus mutans UA159, a cariogenic dental pathogen.</title>
        <authorList>
            <person name="Ajdic D.J."/>
            <person name="McShan W.M."/>
            <person name="McLaughlin R.E."/>
            <person name="Savic G."/>
            <person name="Chang J."/>
            <person name="Carson M.B."/>
            <person name="Primeaux C."/>
            <person name="Tian R."/>
            <person name="Kenton S."/>
            <person name="Jia H.G."/>
            <person name="Lin S.P."/>
            <person name="Qian Y."/>
            <person name="Li S."/>
            <person name="Zhu H."/>
            <person name="Najar F.Z."/>
            <person name="Lai H."/>
            <person name="White J."/>
            <person name="Roe B.A."/>
            <person name="Ferretti J.J."/>
        </authorList>
    </citation>
    <scope>NUCLEOTIDE SEQUENCE [LARGE SCALE GENOMIC DNA]</scope>
    <source>
        <strain>ATCC 700610 / UA159</strain>
    </source>
</reference>
<accession>Q8DUN5</accession>
<gene>
    <name type="ordered locus">SMU_869</name>
</gene>
<organism>
    <name type="scientific">Streptococcus mutans serotype c (strain ATCC 700610 / UA159)</name>
    <dbReference type="NCBI Taxonomy" id="210007"/>
    <lineage>
        <taxon>Bacteria</taxon>
        <taxon>Bacillati</taxon>
        <taxon>Bacillota</taxon>
        <taxon>Bacilli</taxon>
        <taxon>Lactobacillales</taxon>
        <taxon>Streptococcaceae</taxon>
        <taxon>Streptococcus</taxon>
    </lineage>
</organism>
<keyword id="KW-0274">FAD</keyword>
<keyword id="KW-0285">Flavoprotein</keyword>
<keyword id="KW-0521">NADP</keyword>
<keyword id="KW-0560">Oxidoreductase</keyword>
<keyword id="KW-1185">Reference proteome</keyword>
<proteinExistence type="inferred from homology"/>
<name>FENR_STRMU</name>
<comment type="catalytic activity">
    <reaction evidence="1">
        <text>2 reduced [2Fe-2S]-[ferredoxin] + NADP(+) + H(+) = 2 oxidized [2Fe-2S]-[ferredoxin] + NADPH</text>
        <dbReference type="Rhea" id="RHEA:20125"/>
        <dbReference type="Rhea" id="RHEA-COMP:10000"/>
        <dbReference type="Rhea" id="RHEA-COMP:10001"/>
        <dbReference type="ChEBI" id="CHEBI:15378"/>
        <dbReference type="ChEBI" id="CHEBI:33737"/>
        <dbReference type="ChEBI" id="CHEBI:33738"/>
        <dbReference type="ChEBI" id="CHEBI:57783"/>
        <dbReference type="ChEBI" id="CHEBI:58349"/>
        <dbReference type="EC" id="1.18.1.2"/>
    </reaction>
</comment>
<comment type="cofactor">
    <cofactor evidence="1">
        <name>FAD</name>
        <dbReference type="ChEBI" id="CHEBI:57692"/>
    </cofactor>
    <text evidence="1">Binds 1 FAD per subunit.</text>
</comment>
<comment type="subunit">
    <text evidence="1">Homodimer.</text>
</comment>
<comment type="similarity">
    <text evidence="1">Belongs to the ferredoxin--NADP reductase type 2 family.</text>
</comment>
<protein>
    <recommendedName>
        <fullName evidence="1">Ferredoxin--NADP reductase</fullName>
        <shortName evidence="1">FNR</shortName>
        <shortName evidence="1">Fd-NADP(+) reductase</shortName>
        <ecNumber evidence="1">1.18.1.2</ecNumber>
    </recommendedName>
</protein>
<dbReference type="EC" id="1.18.1.2" evidence="1"/>
<dbReference type="EMBL" id="AE014133">
    <property type="protein sequence ID" value="AAN58584.1"/>
    <property type="molecule type" value="Genomic_DNA"/>
</dbReference>
<dbReference type="RefSeq" id="NP_721278.1">
    <property type="nucleotide sequence ID" value="NC_004350.2"/>
</dbReference>
<dbReference type="RefSeq" id="WP_002262017.1">
    <property type="nucleotide sequence ID" value="NC_004350.2"/>
</dbReference>
<dbReference type="SMR" id="Q8DUN5"/>
<dbReference type="STRING" id="210007.SMU_869"/>
<dbReference type="KEGG" id="smu:SMU_869"/>
<dbReference type="eggNOG" id="COG0492">
    <property type="taxonomic scope" value="Bacteria"/>
</dbReference>
<dbReference type="HOGENOM" id="CLU_031864_5_5_9"/>
<dbReference type="OrthoDB" id="9806179at2"/>
<dbReference type="PhylomeDB" id="Q8DUN5"/>
<dbReference type="Proteomes" id="UP000002512">
    <property type="component" value="Chromosome"/>
</dbReference>
<dbReference type="GO" id="GO:0004324">
    <property type="term" value="F:ferredoxin-NADP+ reductase activity"/>
    <property type="evidence" value="ECO:0007669"/>
    <property type="project" value="UniProtKB-UniRule"/>
</dbReference>
<dbReference type="GO" id="GO:0050660">
    <property type="term" value="F:flavin adenine dinucleotide binding"/>
    <property type="evidence" value="ECO:0007669"/>
    <property type="project" value="UniProtKB-UniRule"/>
</dbReference>
<dbReference type="GO" id="GO:0050661">
    <property type="term" value="F:NADP binding"/>
    <property type="evidence" value="ECO:0007669"/>
    <property type="project" value="UniProtKB-UniRule"/>
</dbReference>
<dbReference type="Gene3D" id="3.50.50.60">
    <property type="entry name" value="FAD/NAD(P)-binding domain"/>
    <property type="match status" value="2"/>
</dbReference>
<dbReference type="HAMAP" id="MF_01685">
    <property type="entry name" value="FENR2"/>
    <property type="match status" value="1"/>
</dbReference>
<dbReference type="InterPro" id="IPR036188">
    <property type="entry name" value="FAD/NAD-bd_sf"/>
</dbReference>
<dbReference type="InterPro" id="IPR023753">
    <property type="entry name" value="FAD/NAD-binding_dom"/>
</dbReference>
<dbReference type="InterPro" id="IPR022890">
    <property type="entry name" value="Fd--NADP_Rdtase_type_2"/>
</dbReference>
<dbReference type="InterPro" id="IPR050097">
    <property type="entry name" value="Ferredoxin-NADP_redctase_2"/>
</dbReference>
<dbReference type="PANTHER" id="PTHR48105">
    <property type="entry name" value="THIOREDOXIN REDUCTASE 1-RELATED-RELATED"/>
    <property type="match status" value="1"/>
</dbReference>
<dbReference type="Pfam" id="PF07992">
    <property type="entry name" value="Pyr_redox_2"/>
    <property type="match status" value="1"/>
</dbReference>
<dbReference type="PRINTS" id="PR00368">
    <property type="entry name" value="FADPNR"/>
</dbReference>
<dbReference type="PRINTS" id="PR00469">
    <property type="entry name" value="PNDRDTASEII"/>
</dbReference>
<dbReference type="SUPFAM" id="SSF51905">
    <property type="entry name" value="FAD/NAD(P)-binding domain"/>
    <property type="match status" value="1"/>
</dbReference>
<feature type="chain" id="PRO_0000364955" description="Ferredoxin--NADP reductase">
    <location>
        <begin position="1"/>
        <end position="337"/>
    </location>
</feature>
<feature type="binding site" evidence="1">
    <location>
        <position position="42"/>
    </location>
    <ligand>
        <name>FAD</name>
        <dbReference type="ChEBI" id="CHEBI:57692"/>
    </ligand>
</feature>
<feature type="binding site" evidence="1">
    <location>
        <position position="50"/>
    </location>
    <ligand>
        <name>FAD</name>
        <dbReference type="ChEBI" id="CHEBI:57692"/>
    </ligand>
</feature>
<feature type="binding site" evidence="1">
    <location>
        <position position="55"/>
    </location>
    <ligand>
        <name>FAD</name>
        <dbReference type="ChEBI" id="CHEBI:57692"/>
    </ligand>
</feature>
<feature type="binding site" evidence="1">
    <location>
        <position position="97"/>
    </location>
    <ligand>
        <name>FAD</name>
        <dbReference type="ChEBI" id="CHEBI:57692"/>
    </ligand>
</feature>
<feature type="binding site" evidence="1">
    <location>
        <position position="130"/>
    </location>
    <ligand>
        <name>FAD</name>
        <dbReference type="ChEBI" id="CHEBI:57692"/>
    </ligand>
</feature>
<feature type="binding site" evidence="1">
    <location>
        <position position="292"/>
    </location>
    <ligand>
        <name>FAD</name>
        <dbReference type="ChEBI" id="CHEBI:57692"/>
    </ligand>
</feature>
<feature type="binding site" evidence="1">
    <location>
        <position position="333"/>
    </location>
    <ligand>
        <name>FAD</name>
        <dbReference type="ChEBI" id="CHEBI:57692"/>
    </ligand>
</feature>
<sequence>MEEEKLTSEKEIYDITVIGGGPVGLFTAFYAGLRGISVKVIESLSELGGQPAILYPEKVIYDIPAFPAITGADLVDNLIEQLERFKDKTTICLKEEVKTFEKENAIFTITTNKGNHFSKAIIIACGNGAFAPRRLGLDDEERYADHNLFYNVHKLDQFAGKKVVICGGGDSAVDWANALDKIAESVTLVHRRDAFRAHEHSVEVLKTSHVNIMTPYVPLELKGEGDEATSLVIQKVKSEETKELSLDSLIVSFGFSTSNKNLKSWNIDYKRSSINVSPLFETSQTGVFAIGDAAEYEGKIDLIATGFGEAPTAVNQAIKYIYPERDNRVVHSTSLIK</sequence>